<proteinExistence type="inferred from homology"/>
<accession>Q5L0Y4</accession>
<organism>
    <name type="scientific">Geobacillus kaustophilus (strain HTA426)</name>
    <dbReference type="NCBI Taxonomy" id="235909"/>
    <lineage>
        <taxon>Bacteria</taxon>
        <taxon>Bacillati</taxon>
        <taxon>Bacillota</taxon>
        <taxon>Bacilli</taxon>
        <taxon>Bacillales</taxon>
        <taxon>Anoxybacillaceae</taxon>
        <taxon>Geobacillus</taxon>
        <taxon>Geobacillus thermoleovorans group</taxon>
    </lineage>
</organism>
<evidence type="ECO:0000255" key="1">
    <source>
        <dbReference type="HAMAP-Rule" id="MF_01007"/>
    </source>
</evidence>
<protein>
    <recommendedName>
        <fullName evidence="1">Ribosomal RNA small subunit methyltransferase H</fullName>
        <ecNumber evidence="1">2.1.1.199</ecNumber>
    </recommendedName>
    <alternativeName>
        <fullName evidence="1">16S rRNA m(4)C1402 methyltransferase</fullName>
    </alternativeName>
    <alternativeName>
        <fullName evidence="1">rRNA (cytosine-N(4)-)-methyltransferase RsmH</fullName>
    </alternativeName>
</protein>
<sequence length="310" mass="35289">MFQHTTVLLKEAVDGLNIRPDGIYVDCTLGSGGHSEYLLSRLSEHGKLFAFDQDEAAIMHARERLARYGRQVQFVHRNFRFLQEELSALGVKSVDGVLFDLGVSSPQLDEPERGFSYQHDAPLDMRMNRKQRLTAAEIVNCWPYEELVRIFFRYGEERFSKQVARKIEEVRRTRPIKTTGELVDVIKAAIPAPARRSGGHPAKRIFQALRIAVNDELEAFREALEQAIELLAPGGRVSVITFHSLEDRICKETFKKASESPPLPPGLPVLPDDYRPVLKIITKKPIVPSEEELERNHRARSAKLRIAEKL</sequence>
<gene>
    <name evidence="1" type="primary">rsmH</name>
    <name type="synonym">mraW</name>
    <name type="ordered locus">GK1111</name>
</gene>
<comment type="function">
    <text evidence="1">Specifically methylates the N4 position of cytidine in position 1402 (C1402) of 16S rRNA.</text>
</comment>
<comment type="catalytic activity">
    <reaction evidence="1">
        <text>cytidine(1402) in 16S rRNA + S-adenosyl-L-methionine = N(4)-methylcytidine(1402) in 16S rRNA + S-adenosyl-L-homocysteine + H(+)</text>
        <dbReference type="Rhea" id="RHEA:42928"/>
        <dbReference type="Rhea" id="RHEA-COMP:10286"/>
        <dbReference type="Rhea" id="RHEA-COMP:10287"/>
        <dbReference type="ChEBI" id="CHEBI:15378"/>
        <dbReference type="ChEBI" id="CHEBI:57856"/>
        <dbReference type="ChEBI" id="CHEBI:59789"/>
        <dbReference type="ChEBI" id="CHEBI:74506"/>
        <dbReference type="ChEBI" id="CHEBI:82748"/>
        <dbReference type="EC" id="2.1.1.199"/>
    </reaction>
</comment>
<comment type="subcellular location">
    <subcellularLocation>
        <location evidence="1">Cytoplasm</location>
    </subcellularLocation>
</comment>
<comment type="similarity">
    <text evidence="1">Belongs to the methyltransferase superfamily. RsmH family.</text>
</comment>
<feature type="chain" id="PRO_0000108630" description="Ribosomal RNA small subunit methyltransferase H">
    <location>
        <begin position="1"/>
        <end position="310"/>
    </location>
</feature>
<feature type="binding site" evidence="1">
    <location>
        <begin position="32"/>
        <end position="34"/>
    </location>
    <ligand>
        <name>S-adenosyl-L-methionine</name>
        <dbReference type="ChEBI" id="CHEBI:59789"/>
    </ligand>
</feature>
<feature type="binding site" evidence="1">
    <location>
        <position position="52"/>
    </location>
    <ligand>
        <name>S-adenosyl-L-methionine</name>
        <dbReference type="ChEBI" id="CHEBI:59789"/>
    </ligand>
</feature>
<feature type="binding site" evidence="1">
    <location>
        <position position="79"/>
    </location>
    <ligand>
        <name>S-adenosyl-L-methionine</name>
        <dbReference type="ChEBI" id="CHEBI:59789"/>
    </ligand>
</feature>
<feature type="binding site" evidence="1">
    <location>
        <position position="100"/>
    </location>
    <ligand>
        <name>S-adenosyl-L-methionine</name>
        <dbReference type="ChEBI" id="CHEBI:59789"/>
    </ligand>
</feature>
<feature type="binding site" evidence="1">
    <location>
        <position position="107"/>
    </location>
    <ligand>
        <name>S-adenosyl-L-methionine</name>
        <dbReference type="ChEBI" id="CHEBI:59789"/>
    </ligand>
</feature>
<name>RSMH_GEOKA</name>
<dbReference type="EC" id="2.1.1.199" evidence="1"/>
<dbReference type="EMBL" id="BA000043">
    <property type="protein sequence ID" value="BAD75396.1"/>
    <property type="molecule type" value="Genomic_DNA"/>
</dbReference>
<dbReference type="RefSeq" id="WP_011230611.1">
    <property type="nucleotide sequence ID" value="NC_006510.1"/>
</dbReference>
<dbReference type="SMR" id="Q5L0Y4"/>
<dbReference type="STRING" id="235909.GK1111"/>
<dbReference type="GeneID" id="32063015"/>
<dbReference type="KEGG" id="gka:GK1111"/>
<dbReference type="eggNOG" id="COG0275">
    <property type="taxonomic scope" value="Bacteria"/>
</dbReference>
<dbReference type="HOGENOM" id="CLU_038422_2_0_9"/>
<dbReference type="Proteomes" id="UP000001172">
    <property type="component" value="Chromosome"/>
</dbReference>
<dbReference type="GO" id="GO:0005737">
    <property type="term" value="C:cytoplasm"/>
    <property type="evidence" value="ECO:0007669"/>
    <property type="project" value="UniProtKB-SubCell"/>
</dbReference>
<dbReference type="GO" id="GO:0071424">
    <property type="term" value="F:rRNA (cytosine-N4-)-methyltransferase activity"/>
    <property type="evidence" value="ECO:0007669"/>
    <property type="project" value="UniProtKB-UniRule"/>
</dbReference>
<dbReference type="GO" id="GO:0070475">
    <property type="term" value="P:rRNA base methylation"/>
    <property type="evidence" value="ECO:0007669"/>
    <property type="project" value="UniProtKB-UniRule"/>
</dbReference>
<dbReference type="CDD" id="cd02440">
    <property type="entry name" value="AdoMet_MTases"/>
    <property type="match status" value="1"/>
</dbReference>
<dbReference type="FunFam" id="1.10.150.170:FF:000001">
    <property type="entry name" value="Ribosomal RNA small subunit methyltransferase H"/>
    <property type="match status" value="1"/>
</dbReference>
<dbReference type="Gene3D" id="1.10.150.170">
    <property type="entry name" value="Putative methyltransferase TM0872, insert domain"/>
    <property type="match status" value="1"/>
</dbReference>
<dbReference type="Gene3D" id="3.40.50.150">
    <property type="entry name" value="Vaccinia Virus protein VP39"/>
    <property type="match status" value="1"/>
</dbReference>
<dbReference type="HAMAP" id="MF_01007">
    <property type="entry name" value="16SrRNA_methyltr_H"/>
    <property type="match status" value="1"/>
</dbReference>
<dbReference type="InterPro" id="IPR002903">
    <property type="entry name" value="RsmH"/>
</dbReference>
<dbReference type="InterPro" id="IPR023397">
    <property type="entry name" value="SAM-dep_MeTrfase_MraW_recog"/>
</dbReference>
<dbReference type="InterPro" id="IPR029063">
    <property type="entry name" value="SAM-dependent_MTases_sf"/>
</dbReference>
<dbReference type="NCBIfam" id="TIGR00006">
    <property type="entry name" value="16S rRNA (cytosine(1402)-N(4))-methyltransferase RsmH"/>
    <property type="match status" value="1"/>
</dbReference>
<dbReference type="PANTHER" id="PTHR11265:SF0">
    <property type="entry name" value="12S RRNA N4-METHYLCYTIDINE METHYLTRANSFERASE"/>
    <property type="match status" value="1"/>
</dbReference>
<dbReference type="PANTHER" id="PTHR11265">
    <property type="entry name" value="S-ADENOSYL-METHYLTRANSFERASE MRAW"/>
    <property type="match status" value="1"/>
</dbReference>
<dbReference type="Pfam" id="PF01795">
    <property type="entry name" value="Methyltransf_5"/>
    <property type="match status" value="1"/>
</dbReference>
<dbReference type="PIRSF" id="PIRSF004486">
    <property type="entry name" value="MraW"/>
    <property type="match status" value="1"/>
</dbReference>
<dbReference type="SUPFAM" id="SSF81799">
    <property type="entry name" value="Putative methyltransferase TM0872, insert domain"/>
    <property type="match status" value="1"/>
</dbReference>
<dbReference type="SUPFAM" id="SSF53335">
    <property type="entry name" value="S-adenosyl-L-methionine-dependent methyltransferases"/>
    <property type="match status" value="1"/>
</dbReference>
<keyword id="KW-0963">Cytoplasm</keyword>
<keyword id="KW-0489">Methyltransferase</keyword>
<keyword id="KW-1185">Reference proteome</keyword>
<keyword id="KW-0698">rRNA processing</keyword>
<keyword id="KW-0949">S-adenosyl-L-methionine</keyword>
<keyword id="KW-0808">Transferase</keyword>
<reference key="1">
    <citation type="journal article" date="2004" name="Nucleic Acids Res.">
        <title>Thermoadaptation trait revealed by the genome sequence of thermophilic Geobacillus kaustophilus.</title>
        <authorList>
            <person name="Takami H."/>
            <person name="Takaki Y."/>
            <person name="Chee G.-J."/>
            <person name="Nishi S."/>
            <person name="Shimamura S."/>
            <person name="Suzuki H."/>
            <person name="Matsui S."/>
            <person name="Uchiyama I."/>
        </authorList>
    </citation>
    <scope>NUCLEOTIDE SEQUENCE [LARGE SCALE GENOMIC DNA]</scope>
    <source>
        <strain>HTA426</strain>
    </source>
</reference>